<sequence length="778" mass="87097">MSSDWDEIKRLAADFQKAQLTSTLQKLSERNCIEIVTLLLEKQLLDVVFTNDGKEYITPDHLEREIQDELYANGGRANLVEVSKTLNVDLSRIVTLAERIAAENPHIHLLLGQLIDEDYITHIAQEINEKLAQHGEISISDLTSQFDLPSDFLQQNVVEKHLGKIIKGRQDASNPRVFFTQAYIQRCKAKIRGALAAITKPTNVAVILQQINVQEKIFHSLLDEISPAGQVTSKQANAQYVPHIYAKTQADWVNSFYKQNSFLEYEAINKLGISDAKTYIRNQFPNEQFLFLKRVALGARLIELTVVSALNECSATKHYLDLSTILPSNLSEEDIAEAFDAVIAQKHCNPSHFVYLESIVFSQAYLTELVQPCHDMALALAKSAIDNGVYQQYIVEKTLAQKGNNLSTSHDADDDSKTDKRDERRRKAASGKAGGGAQGRETKTKSTKKHQRGRAAAHNHDSEDEEDTVQQSAGNTRKSVKALELVKSSDIINLIKITLEEEGLEHLAKPIAALYLNQLNQVALSKAQELYEATPQTNRRQTHAAIQERVNMLLVDIRLYEKGLKLFHADTQTQLVKYLLKSLGNEICNELTLYVAAECSLSVKSTNLNVDQRIKLIQELDAQYRNALLEQNKALNRSIEDFELATESVLKACSMIIKKADKKKDRALIIGHKEKLLQQLLECHEPALLLHLAALILFTTITGCILHASGKFVSAILQHIRASLNEPQNALYLVLQMLQQATPDSAESKSINEQLQSLQAEVVDLAQNYSRASVSKAD</sequence>
<organism>
    <name type="scientific">Drosophila virilis</name>
    <name type="common">Fruit fly</name>
    <dbReference type="NCBI Taxonomy" id="7244"/>
    <lineage>
        <taxon>Eukaryota</taxon>
        <taxon>Metazoa</taxon>
        <taxon>Ecdysozoa</taxon>
        <taxon>Arthropoda</taxon>
        <taxon>Hexapoda</taxon>
        <taxon>Insecta</taxon>
        <taxon>Pterygota</taxon>
        <taxon>Neoptera</taxon>
        <taxon>Endopterygota</taxon>
        <taxon>Diptera</taxon>
        <taxon>Brachycera</taxon>
        <taxon>Muscomorpha</taxon>
        <taxon>Ephydroidea</taxon>
        <taxon>Drosophilidae</taxon>
        <taxon>Drosophila</taxon>
    </lineage>
</organism>
<evidence type="ECO:0000250" key="1">
    <source>
        <dbReference type="UniProtKB" id="O94874"/>
    </source>
</evidence>
<evidence type="ECO:0000256" key="2">
    <source>
        <dbReference type="SAM" id="MobiDB-lite"/>
    </source>
</evidence>
<evidence type="ECO:0000305" key="3"/>
<comment type="function">
    <text evidence="1">E3 UFM1-protein ligase that mediates ufmylation of target proteins.</text>
</comment>
<comment type="similarity">
    <text evidence="3">Belongs to the UFL1 family.</text>
</comment>
<feature type="chain" id="PRO_0000391888" description="E3 UFM1-protein ligase 1 homolog">
    <location>
        <begin position="1"/>
        <end position="778"/>
    </location>
</feature>
<feature type="region of interest" description="Disordered" evidence="2">
    <location>
        <begin position="404"/>
        <end position="477"/>
    </location>
</feature>
<feature type="compositionally biased region" description="Basic residues" evidence="2">
    <location>
        <begin position="445"/>
        <end position="457"/>
    </location>
</feature>
<keyword id="KW-1185">Reference proteome</keyword>
<keyword id="KW-0808">Transferase</keyword>
<keyword id="KW-0833">Ubl conjugation pathway</keyword>
<proteinExistence type="inferred from homology"/>
<gene>
    <name type="ORF">GJ24026</name>
</gene>
<protein>
    <recommendedName>
        <fullName>E3 UFM1-protein ligase 1 homolog</fullName>
        <ecNumber>2.3.2.-</ecNumber>
    </recommendedName>
    <alternativeName>
        <fullName evidence="3">E3 UFM1-protein transferase 1 homolog</fullName>
    </alternativeName>
</protein>
<accession>B4LZW7</accession>
<reference key="1">
    <citation type="journal article" date="2007" name="Nature">
        <title>Evolution of genes and genomes on the Drosophila phylogeny.</title>
        <authorList>
            <consortium name="Drosophila 12 genomes consortium"/>
        </authorList>
    </citation>
    <scope>NUCLEOTIDE SEQUENCE [LARGE SCALE GENOMIC DNA]</scope>
    <source>
        <strain>Tucson 15010-1051.87</strain>
    </source>
</reference>
<dbReference type="EC" id="2.3.2.-"/>
<dbReference type="EMBL" id="CH940650">
    <property type="protein sequence ID" value="EDW67195.1"/>
    <property type="molecule type" value="Genomic_DNA"/>
</dbReference>
<dbReference type="RefSeq" id="XP_002053675.2">
    <property type="nucleotide sequence ID" value="XM_002053639.2"/>
</dbReference>
<dbReference type="SMR" id="B4LZW7"/>
<dbReference type="FunCoup" id="B4LZW7">
    <property type="interactions" value="2492"/>
</dbReference>
<dbReference type="STRING" id="7244.B4LZW7"/>
<dbReference type="GeneID" id="6629718"/>
<dbReference type="KEGG" id="dvi:6629718"/>
<dbReference type="CTD" id="23376"/>
<dbReference type="eggNOG" id="KOG2235">
    <property type="taxonomic scope" value="Eukaryota"/>
</dbReference>
<dbReference type="HOGENOM" id="CLU_012417_1_1_1"/>
<dbReference type="InParanoid" id="B4LZW7"/>
<dbReference type="OMA" id="CILHASG"/>
<dbReference type="OrthoDB" id="10258297at2759"/>
<dbReference type="PhylomeDB" id="B4LZW7"/>
<dbReference type="Proteomes" id="UP000008792">
    <property type="component" value="Unassembled WGS sequence"/>
</dbReference>
<dbReference type="GO" id="GO:0005789">
    <property type="term" value="C:endoplasmic reticulum membrane"/>
    <property type="evidence" value="ECO:0007669"/>
    <property type="project" value="TreeGrafter"/>
</dbReference>
<dbReference type="GO" id="GO:0061666">
    <property type="term" value="F:UFM1 ligase activity"/>
    <property type="evidence" value="ECO:0007669"/>
    <property type="project" value="EnsemblMetazoa"/>
</dbReference>
<dbReference type="GO" id="GO:1990592">
    <property type="term" value="P:protein K69-linked ufmylation"/>
    <property type="evidence" value="ECO:0007669"/>
    <property type="project" value="TreeGrafter"/>
</dbReference>
<dbReference type="GO" id="GO:0032434">
    <property type="term" value="P:regulation of proteasomal ubiquitin-dependent protein catabolic process"/>
    <property type="evidence" value="ECO:0007669"/>
    <property type="project" value="TreeGrafter"/>
</dbReference>
<dbReference type="GO" id="GO:0034976">
    <property type="term" value="P:response to endoplasmic reticulum stress"/>
    <property type="evidence" value="ECO:0007669"/>
    <property type="project" value="TreeGrafter"/>
</dbReference>
<dbReference type="InterPro" id="IPR018611">
    <property type="entry name" value="Ufl1"/>
</dbReference>
<dbReference type="InterPro" id="IPR056761">
    <property type="entry name" value="Ufl1-like_C"/>
</dbReference>
<dbReference type="InterPro" id="IPR056580">
    <property type="entry name" value="Ufl1_dom"/>
</dbReference>
<dbReference type="InterPro" id="IPR056579">
    <property type="entry name" value="Ufl1_N"/>
</dbReference>
<dbReference type="PANTHER" id="PTHR31057">
    <property type="entry name" value="E3 UFM1-PROTEIN LIGASE 1"/>
    <property type="match status" value="1"/>
</dbReference>
<dbReference type="PANTHER" id="PTHR31057:SF0">
    <property type="entry name" value="E3 UFM1-PROTEIN LIGASE 1"/>
    <property type="match status" value="1"/>
</dbReference>
<dbReference type="Pfam" id="PF09743">
    <property type="entry name" value="E3_UFM1_ligase"/>
    <property type="match status" value="1"/>
</dbReference>
<dbReference type="Pfam" id="PF23659">
    <property type="entry name" value="UFL1"/>
    <property type="match status" value="1"/>
</dbReference>
<dbReference type="Pfam" id="PF25041">
    <property type="entry name" value="UFL1_C"/>
    <property type="match status" value="1"/>
</dbReference>
<name>UFL1_DROVI</name>